<name>A28_FOWPN</name>
<feature type="chain" id="PRO_0000099291" description="Envelope protein A28 homolog">
    <location>
        <begin position="1"/>
        <end position="141"/>
    </location>
</feature>
<feature type="transmembrane region" description="Helical; Signal-anchor for type II membrane protein" evidence="2">
    <location>
        <begin position="1"/>
        <end position="21"/>
    </location>
</feature>
<feature type="topological domain" description="Virion surface" evidence="2">
    <location>
        <begin position="22"/>
        <end position="141"/>
    </location>
</feature>
<organism>
    <name type="scientific">Fowlpox virus (strain NVSL)</name>
    <name type="common">FPV</name>
    <dbReference type="NCBI Taxonomy" id="928301"/>
    <lineage>
        <taxon>Viruses</taxon>
        <taxon>Varidnaviria</taxon>
        <taxon>Bamfordvirae</taxon>
        <taxon>Nucleocytoviricota</taxon>
        <taxon>Pokkesviricetes</taxon>
        <taxon>Chitovirales</taxon>
        <taxon>Poxviridae</taxon>
        <taxon>Chordopoxvirinae</taxon>
        <taxon>Avipoxvirus</taxon>
        <taxon>Fowlpox virus</taxon>
    </lineage>
</organism>
<dbReference type="EMBL" id="AF198100">
    <property type="protein sequence ID" value="AAF44536.1"/>
    <property type="molecule type" value="Genomic_DNA"/>
</dbReference>
<dbReference type="RefSeq" id="NP_039155.1">
    <property type="nucleotide sequence ID" value="NC_002188.1"/>
</dbReference>
<dbReference type="GeneID" id="1486764"/>
<dbReference type="KEGG" id="vg:1486764"/>
<dbReference type="Proteomes" id="UP000008597">
    <property type="component" value="Segment"/>
</dbReference>
<dbReference type="GO" id="GO:0016020">
    <property type="term" value="C:membrane"/>
    <property type="evidence" value="ECO:0007669"/>
    <property type="project" value="UniProtKB-KW"/>
</dbReference>
<dbReference type="GO" id="GO:0019031">
    <property type="term" value="C:viral envelope"/>
    <property type="evidence" value="ECO:0007669"/>
    <property type="project" value="UniProtKB-KW"/>
</dbReference>
<dbReference type="GO" id="GO:0055036">
    <property type="term" value="C:virion membrane"/>
    <property type="evidence" value="ECO:0007669"/>
    <property type="project" value="UniProtKB-SubCell"/>
</dbReference>
<dbReference type="GO" id="GO:0039663">
    <property type="term" value="P:membrane fusion involved in viral entry into host cell"/>
    <property type="evidence" value="ECO:0007669"/>
    <property type="project" value="UniProtKB-KW"/>
</dbReference>
<dbReference type="GO" id="GO:0046718">
    <property type="term" value="P:symbiont entry into host cell"/>
    <property type="evidence" value="ECO:0007669"/>
    <property type="project" value="UniProtKB-KW"/>
</dbReference>
<dbReference type="InterPro" id="IPR007664">
    <property type="entry name" value="Poxvirus_A28"/>
</dbReference>
<dbReference type="Pfam" id="PF04584">
    <property type="entry name" value="Pox_A28"/>
    <property type="match status" value="1"/>
</dbReference>
<accession>Q9J541</accession>
<reference key="1">
    <citation type="journal article" date="2000" name="J. Virol.">
        <title>The genome of fowlpox virus.</title>
        <authorList>
            <person name="Afonso C.L."/>
            <person name="Tulman E.R."/>
            <person name="Lu Z."/>
            <person name="Zsak L."/>
            <person name="Kutish G.F."/>
            <person name="Rock D.L."/>
        </authorList>
    </citation>
    <scope>NUCLEOTIDE SEQUENCE [LARGE SCALE GENOMIC DNA]</scope>
</reference>
<comment type="function">
    <text evidence="1">Envelope protein required for virus entry into host cell and for cell-cell fusion (syncytium formation).</text>
</comment>
<comment type="subcellular location">
    <subcellularLocation>
        <location evidence="3">Virion membrane</location>
        <topology evidence="3">Single-pass type II membrane protein</topology>
    </subcellularLocation>
    <text evidence="1">Component of the intracellular mature virion (IMV) membrane.</text>
</comment>
<comment type="PTM">
    <text evidence="1">Contains two intramolecular disulfide bonds. They are created by the viral disulfide bond formation pathway, a poxvirus-specific pathway that operates on the cytoplasmic side of the MV membranes (By similarity).</text>
</comment>
<comment type="similarity">
    <text evidence="3">Belongs to the poxviridae A28 protein family.</text>
</comment>
<evidence type="ECO:0000250" key="1"/>
<evidence type="ECO:0000255" key="2"/>
<evidence type="ECO:0000305" key="3"/>
<keyword id="KW-1015">Disulfide bond</keyword>
<keyword id="KW-1168">Fusion of virus membrane with host membrane</keyword>
<keyword id="KW-0426">Late protein</keyword>
<keyword id="KW-0472">Membrane</keyword>
<keyword id="KW-1185">Reference proteome</keyword>
<keyword id="KW-0735">Signal-anchor</keyword>
<keyword id="KW-0812">Transmembrane</keyword>
<keyword id="KW-1133">Transmembrane helix</keyword>
<keyword id="KW-0261">Viral envelope protein</keyword>
<keyword id="KW-1162">Viral penetration into host cytoplasm</keyword>
<keyword id="KW-0946">Virion</keyword>
<keyword id="KW-1160">Virus entry into host cell</keyword>
<proteinExistence type="inferred from homology"/>
<gene>
    <name type="ordered locus">FPV192</name>
</gene>
<organismHost>
    <name type="scientific">Vertebrata</name>
    <dbReference type="NCBI Taxonomy" id="7742"/>
</organismHost>
<sequence length="141" mass="16114">MDALFVFIIILATAVICLFLFQAYTIYDNYHNIIEFNEKYGGLEYSRSPGGLYIDKRVFDPNDSETDPKAKWRCVNYNNNQYASASKFGYLATSSRNPVLFTNLEDCVYYNYTRGEIGTIWNPCAEYGEGSAECSTLKSHL</sequence>
<protein>
    <recommendedName>
        <fullName>Envelope protein A28 homolog</fullName>
    </recommendedName>
    <alternativeName>
        <fullName>Protein FPV192</fullName>
    </alternativeName>
</protein>